<comment type="function">
    <text evidence="1">The glycine cleavage system catalyzes the degradation of glycine. The P protein binds the alpha-amino group of glycine through its pyridoxal phosphate cofactor; CO(2) is released and the remaining methylamine moiety is then transferred to the lipoamide cofactor of the H protein.</text>
</comment>
<comment type="catalytic activity">
    <reaction evidence="1">
        <text>N(6)-[(R)-lipoyl]-L-lysyl-[glycine-cleavage complex H protein] + glycine + H(+) = N(6)-[(R)-S(8)-aminomethyldihydrolipoyl]-L-lysyl-[glycine-cleavage complex H protein] + CO2</text>
        <dbReference type="Rhea" id="RHEA:24304"/>
        <dbReference type="Rhea" id="RHEA-COMP:10494"/>
        <dbReference type="Rhea" id="RHEA-COMP:10495"/>
        <dbReference type="ChEBI" id="CHEBI:15378"/>
        <dbReference type="ChEBI" id="CHEBI:16526"/>
        <dbReference type="ChEBI" id="CHEBI:57305"/>
        <dbReference type="ChEBI" id="CHEBI:83099"/>
        <dbReference type="ChEBI" id="CHEBI:83143"/>
        <dbReference type="EC" id="1.4.4.2"/>
    </reaction>
</comment>
<comment type="cofactor">
    <cofactor evidence="1">
        <name>pyridoxal 5'-phosphate</name>
        <dbReference type="ChEBI" id="CHEBI:597326"/>
    </cofactor>
</comment>
<comment type="subunit">
    <text evidence="1">The glycine cleavage system is composed of four proteins: P, T, L and H.</text>
</comment>
<comment type="similarity">
    <text evidence="1">Belongs to the GcvP family.</text>
</comment>
<feature type="chain" id="PRO_0000227124" description="Glycine dehydrogenase (decarboxylating)">
    <location>
        <begin position="1"/>
        <end position="956"/>
    </location>
</feature>
<feature type="modified residue" description="N6-(pyridoxal phosphate)lysine" evidence="1">
    <location>
        <position position="697"/>
    </location>
</feature>
<sequence>MSFTPTDYNAYDFANRRHIGPSPSEMEEMLRVVGVSSLDQLIEETVPASIRQETPLDWAPLAEHELLARMREVAAKNRVMTSLIGQGYYGTVTPPAIQRNILENPAWYTAYTPYQPEIAQGRLEALLNYQTMVADLTGLPVANASLLDEATAAAEAMTMAERASKSKARAFFVDADCHPQTISVIRTRAEPLGIEVIVGHPAQLVPEDVFGALFQYPGTYGLVRDFTRDIAALHEAKALAVVATDLLALCLLKEPGAMGADIAIGSSQRFGVPMGYGGPHAAFMSCKDDLKRSMPGRLVGVSVDARGNKAYRLALQTREQHIRREKATSNVCTAQALLAVMASFYAVFHGPRGLRAIAERVHLNTVRLATALKEAGARVSPEAFFDTITVEVGVGQAGILAAARHRGINLRKVGRDRVGISLDETTDAGVIARVLDAFGIHEPAPAKVGLGFPEPLLRETGYLSHPVFQMNRAESEMMRYMRRLSDRDLALDRAMIPLGSCTMKLNAAAEMMPITWPEFGTLHPFAPADQAAGYHEAIGDLAQRLCRITGYDAMSMQPNSGAQGEYAGLLTILAYHRARGDAERTICLIPVSAHGTNPASAQMAGMKVVVVKSAPNGDVDLEDFRDKAAAAGDRLAACMITYPSTHGVFEETVREVCRITHEHGGQVYIDGANMNAMVGLVQPGAIGGDVSHLNLHKTFAIPHGGGGPGMGPIGVKAHLAPYLPGHPEVTGPLTGGHDEAADEGPVSAAPYGSASILLISWAYCLMMGGEGLTQATRVAILNANYIAARLRGAYKVLFMGNRGRVAHECILDTRPFAEAGVTVDDIAKRLIDNGFHAPTMSWPVPGTLMVEPTESETKAEIDRFVAALLAIREEIRAVEEGEIAAADSPLRHAPHTVEDLVADWDRKYPREQGCFPPGSFRVDKYWPPVGRVDNAWGDRNLVCTCPPVESYSIAAQ</sequence>
<dbReference type="EC" id="1.4.4.2" evidence="1"/>
<dbReference type="EMBL" id="CP000143">
    <property type="protein sequence ID" value="ABA78350.1"/>
    <property type="molecule type" value="Genomic_DNA"/>
</dbReference>
<dbReference type="RefSeq" id="WP_011337303.1">
    <property type="nucleotide sequence ID" value="NZ_CP030271.1"/>
</dbReference>
<dbReference type="RefSeq" id="YP_352251.1">
    <property type="nucleotide sequence ID" value="NC_007493.2"/>
</dbReference>
<dbReference type="SMR" id="Q3J4D4"/>
<dbReference type="STRING" id="272943.RSP_2195"/>
<dbReference type="EnsemblBacteria" id="ABA78350">
    <property type="protein sequence ID" value="ABA78350"/>
    <property type="gene ID" value="RSP_2195"/>
</dbReference>
<dbReference type="GeneID" id="67445967"/>
<dbReference type="KEGG" id="rsp:RSP_2195"/>
<dbReference type="PATRIC" id="fig|272943.9.peg.1095"/>
<dbReference type="eggNOG" id="COG0403">
    <property type="taxonomic scope" value="Bacteria"/>
</dbReference>
<dbReference type="eggNOG" id="COG1003">
    <property type="taxonomic scope" value="Bacteria"/>
</dbReference>
<dbReference type="OrthoDB" id="9801272at2"/>
<dbReference type="PhylomeDB" id="Q3J4D4"/>
<dbReference type="Proteomes" id="UP000002703">
    <property type="component" value="Chromosome 1"/>
</dbReference>
<dbReference type="GO" id="GO:0005829">
    <property type="term" value="C:cytosol"/>
    <property type="evidence" value="ECO:0007669"/>
    <property type="project" value="TreeGrafter"/>
</dbReference>
<dbReference type="GO" id="GO:0005960">
    <property type="term" value="C:glycine cleavage complex"/>
    <property type="evidence" value="ECO:0007669"/>
    <property type="project" value="TreeGrafter"/>
</dbReference>
<dbReference type="GO" id="GO:0016594">
    <property type="term" value="F:glycine binding"/>
    <property type="evidence" value="ECO:0007669"/>
    <property type="project" value="TreeGrafter"/>
</dbReference>
<dbReference type="GO" id="GO:0004375">
    <property type="term" value="F:glycine dehydrogenase (decarboxylating) activity"/>
    <property type="evidence" value="ECO:0007669"/>
    <property type="project" value="UniProtKB-EC"/>
</dbReference>
<dbReference type="GO" id="GO:0030170">
    <property type="term" value="F:pyridoxal phosphate binding"/>
    <property type="evidence" value="ECO:0007669"/>
    <property type="project" value="TreeGrafter"/>
</dbReference>
<dbReference type="GO" id="GO:0019464">
    <property type="term" value="P:glycine decarboxylation via glycine cleavage system"/>
    <property type="evidence" value="ECO:0007669"/>
    <property type="project" value="UniProtKB-UniRule"/>
</dbReference>
<dbReference type="CDD" id="cd00613">
    <property type="entry name" value="GDC-P"/>
    <property type="match status" value="2"/>
</dbReference>
<dbReference type="FunFam" id="3.40.640.10:FF:000005">
    <property type="entry name" value="Glycine dehydrogenase (decarboxylating), mitochondrial"/>
    <property type="match status" value="1"/>
</dbReference>
<dbReference type="FunFam" id="3.40.640.10:FF:000007">
    <property type="entry name" value="glycine dehydrogenase (Decarboxylating), mitochondrial"/>
    <property type="match status" value="1"/>
</dbReference>
<dbReference type="Gene3D" id="3.90.1150.10">
    <property type="entry name" value="Aspartate Aminotransferase, domain 1"/>
    <property type="match status" value="2"/>
</dbReference>
<dbReference type="Gene3D" id="3.40.640.10">
    <property type="entry name" value="Type I PLP-dependent aspartate aminotransferase-like (Major domain)"/>
    <property type="match status" value="2"/>
</dbReference>
<dbReference type="HAMAP" id="MF_00711">
    <property type="entry name" value="GcvP"/>
    <property type="match status" value="1"/>
</dbReference>
<dbReference type="InterPro" id="IPR003437">
    <property type="entry name" value="GcvP"/>
</dbReference>
<dbReference type="InterPro" id="IPR049316">
    <property type="entry name" value="GDC-P_C"/>
</dbReference>
<dbReference type="InterPro" id="IPR049315">
    <property type="entry name" value="GDC-P_N"/>
</dbReference>
<dbReference type="InterPro" id="IPR020581">
    <property type="entry name" value="GDC_P"/>
</dbReference>
<dbReference type="InterPro" id="IPR015424">
    <property type="entry name" value="PyrdxlP-dep_Trfase"/>
</dbReference>
<dbReference type="InterPro" id="IPR015421">
    <property type="entry name" value="PyrdxlP-dep_Trfase_major"/>
</dbReference>
<dbReference type="InterPro" id="IPR015422">
    <property type="entry name" value="PyrdxlP-dep_Trfase_small"/>
</dbReference>
<dbReference type="NCBIfam" id="TIGR00461">
    <property type="entry name" value="gcvP"/>
    <property type="match status" value="1"/>
</dbReference>
<dbReference type="NCBIfam" id="NF003346">
    <property type="entry name" value="PRK04366.1"/>
    <property type="match status" value="1"/>
</dbReference>
<dbReference type="PANTHER" id="PTHR11773:SF1">
    <property type="entry name" value="GLYCINE DEHYDROGENASE (DECARBOXYLATING), MITOCHONDRIAL"/>
    <property type="match status" value="1"/>
</dbReference>
<dbReference type="PANTHER" id="PTHR11773">
    <property type="entry name" value="GLYCINE DEHYDROGENASE, DECARBOXYLATING"/>
    <property type="match status" value="1"/>
</dbReference>
<dbReference type="Pfam" id="PF21478">
    <property type="entry name" value="GcvP2_C"/>
    <property type="match status" value="1"/>
</dbReference>
<dbReference type="Pfam" id="PF02347">
    <property type="entry name" value="GDC-P"/>
    <property type="match status" value="2"/>
</dbReference>
<dbReference type="SUPFAM" id="SSF53383">
    <property type="entry name" value="PLP-dependent transferases"/>
    <property type="match status" value="2"/>
</dbReference>
<keyword id="KW-0560">Oxidoreductase</keyword>
<keyword id="KW-0663">Pyridoxal phosphate</keyword>
<keyword id="KW-1185">Reference proteome</keyword>
<gene>
    <name evidence="1" type="primary">gcvP</name>
    <name type="ordered locus">RHOS4_07820</name>
    <name type="ORF">RSP_2195</name>
</gene>
<proteinExistence type="inferred from homology"/>
<reference key="1">
    <citation type="submission" date="2005-09" db="EMBL/GenBank/DDBJ databases">
        <title>Complete sequence of chromosome 1 of Rhodobacter sphaeroides 2.4.1.</title>
        <authorList>
            <person name="Copeland A."/>
            <person name="Lucas S."/>
            <person name="Lapidus A."/>
            <person name="Barry K."/>
            <person name="Detter J.C."/>
            <person name="Glavina T."/>
            <person name="Hammon N."/>
            <person name="Israni S."/>
            <person name="Pitluck S."/>
            <person name="Richardson P."/>
            <person name="Mackenzie C."/>
            <person name="Choudhary M."/>
            <person name="Larimer F."/>
            <person name="Hauser L.J."/>
            <person name="Land M."/>
            <person name="Donohue T.J."/>
            <person name="Kaplan S."/>
        </authorList>
    </citation>
    <scope>NUCLEOTIDE SEQUENCE [LARGE SCALE GENOMIC DNA]</scope>
    <source>
        <strain>ATCC 17023 / DSM 158 / JCM 6121 / CCUG 31486 / LMG 2827 / NBRC 12203 / NCIMB 8253 / ATH 2.4.1.</strain>
    </source>
</reference>
<accession>Q3J4D4</accession>
<organism>
    <name type="scientific">Cereibacter sphaeroides (strain ATCC 17023 / DSM 158 / JCM 6121 / CCUG 31486 / LMG 2827 / NBRC 12203 / NCIMB 8253 / ATH 2.4.1.)</name>
    <name type="common">Rhodobacter sphaeroides</name>
    <dbReference type="NCBI Taxonomy" id="272943"/>
    <lineage>
        <taxon>Bacteria</taxon>
        <taxon>Pseudomonadati</taxon>
        <taxon>Pseudomonadota</taxon>
        <taxon>Alphaproteobacteria</taxon>
        <taxon>Rhodobacterales</taxon>
        <taxon>Paracoccaceae</taxon>
        <taxon>Cereibacter</taxon>
    </lineage>
</organism>
<name>GCSP_CERS4</name>
<protein>
    <recommendedName>
        <fullName evidence="1">Glycine dehydrogenase (decarboxylating)</fullName>
        <ecNumber evidence="1">1.4.4.2</ecNumber>
    </recommendedName>
    <alternativeName>
        <fullName evidence="1">Glycine cleavage system P-protein</fullName>
    </alternativeName>
    <alternativeName>
        <fullName evidence="1">Glycine decarboxylase</fullName>
    </alternativeName>
    <alternativeName>
        <fullName evidence="1">Glycine dehydrogenase (aminomethyl-transferring)</fullName>
    </alternativeName>
</protein>
<evidence type="ECO:0000255" key="1">
    <source>
        <dbReference type="HAMAP-Rule" id="MF_00711"/>
    </source>
</evidence>